<organism>
    <name type="scientific">Human cytomegalovirus (strain AD169)</name>
    <name type="common">HHV-5</name>
    <name type="synonym">Human herpesvirus 5</name>
    <dbReference type="NCBI Taxonomy" id="10360"/>
    <lineage>
        <taxon>Viruses</taxon>
        <taxon>Duplodnaviria</taxon>
        <taxon>Heunggongvirae</taxon>
        <taxon>Peploviricota</taxon>
        <taxon>Herviviricetes</taxon>
        <taxon>Herpesvirales</taxon>
        <taxon>Orthoherpesviridae</taxon>
        <taxon>Betaherpesvirinae</taxon>
        <taxon>Cytomegalovirus</taxon>
        <taxon>Cytomegalovirus humanbeta5</taxon>
        <taxon>Human cytomegalovirus</taxon>
    </lineage>
</organism>
<protein>
    <recommendedName>
        <fullName>Uncharacterized protein IRL3</fullName>
        <shortName>TRL3</shortName>
    </recommendedName>
</protein>
<proteinExistence type="predicted"/>
<dbReference type="EMBL" id="X17403">
    <property type="protein sequence ID" value="CAA35451.1"/>
    <property type="molecule type" value="Genomic_DNA"/>
</dbReference>
<dbReference type="EMBL" id="X17403">
    <property type="protein sequence ID" value="CAA35307.1"/>
    <property type="molecule type" value="Genomic_DNA"/>
</dbReference>
<dbReference type="PIR" id="S09752">
    <property type="entry name" value="S09752"/>
</dbReference>
<dbReference type="SMR" id="P17142"/>
<dbReference type="Proteomes" id="UP000008991">
    <property type="component" value="Segment"/>
</dbReference>
<accession>P17142</accession>
<reference key="1">
    <citation type="journal article" date="1990" name="Curr. Top. Microbiol. Immunol.">
        <title>Analysis of the protein-coding content of the sequence of human cytomegalovirus strain AD169.</title>
        <authorList>
            <person name="Chee M.S."/>
            <person name="Bankier A.T."/>
            <person name="Beck S."/>
            <person name="Bohni R."/>
            <person name="Brown C.M."/>
            <person name="Cerny R."/>
            <person name="Horsnell T."/>
            <person name="Hutchison C.A. III"/>
            <person name="Kouzarides T."/>
            <person name="Martignetti J.A."/>
            <person name="Preddie E."/>
            <person name="Satchwell S.C."/>
            <person name="Tomlinson P."/>
            <person name="Weston K.M."/>
            <person name="Barrell B.G."/>
        </authorList>
    </citation>
    <scope>NUCLEOTIDE SEQUENCE [LARGE SCALE GENOMIC DNA]</scope>
</reference>
<name>IR03_HCMVA</name>
<organismHost>
    <name type="scientific">Homo sapiens</name>
    <name type="common">Human</name>
    <dbReference type="NCBI Taxonomy" id="9606"/>
</organismHost>
<feature type="chain" id="PRO_0000115251" description="Uncharacterized protein IRL3">
    <location>
        <begin position="1"/>
        <end position="114"/>
    </location>
</feature>
<sequence>MYCFLFLQKDTFFHEQFLARRRHAEVGPLRSAACRRRPGDLGFTVFSLLSLHTDRVAGAVRNHRRLSFFDDYGNTKSYLGAYTSKIGVLVVVCGFYFFLYLSMTVFLFFVLIII</sequence>